<name>RNMS_ASPPH</name>
<evidence type="ECO:0000305" key="1"/>
<evidence type="ECO:0007829" key="2">
    <source>
        <dbReference type="PDB" id="1RDS"/>
    </source>
</evidence>
<comment type="catalytic activity">
    <reaction>
        <text>[RNA] containing guanosine + H2O = an [RNA fragment]-3'-guanosine-3'-phosphate + a 5'-hydroxy-ribonucleotide-3'-[RNA fragment].</text>
        <dbReference type="EC" id="4.6.1.24"/>
    </reaction>
</comment>
<comment type="similarity">
    <text evidence="1">Belongs to the ribonuclease N1/T1 family.</text>
</comment>
<reference key="1">
    <citation type="journal article" date="1982" name="J. Biochem.">
        <title>Primary structure of a minor ribonuclease from Aspergillus saitoi.</title>
        <authorList>
            <person name="Watanabe H."/>
            <person name="Ohgi K."/>
            <person name="Irie M."/>
        </authorList>
    </citation>
    <scope>PROTEIN SEQUENCE</scope>
</reference>
<reference key="2">
    <citation type="journal article" date="1991" name="FEBS Lett.">
        <title>Three-dimensional structure of ribonuclease Ms*3'-guanylic acid complex at 2.5-A resolution.</title>
        <authorList>
            <person name="Nonaka T."/>
            <person name="Mitsui Y."/>
            <person name="Irie M."/>
            <person name="Nakamura K.T."/>
        </authorList>
    </citation>
    <scope>X-RAY CRYSTALLOGRAPHY (2.5 ANGSTROMS)</scope>
    <scope>SEQUENCE REVISION TO 52-54; 80 AND 95</scope>
</reference>
<feature type="chain" id="PRO_0000137370" description="Guanyl-specific ribonuclease Ms">
    <location>
        <begin position="1"/>
        <end position="105"/>
    </location>
</feature>
<feature type="active site">
    <location>
        <position position="39"/>
    </location>
</feature>
<feature type="active site" description="Proton acceptor">
    <location>
        <position position="57"/>
    </location>
</feature>
<feature type="active site" description="Proton donor">
    <location>
        <position position="91"/>
    </location>
</feature>
<feature type="disulfide bond">
    <location>
        <begin position="3"/>
        <end position="11"/>
    </location>
</feature>
<feature type="disulfide bond">
    <location>
        <begin position="7"/>
        <end position="102"/>
    </location>
</feature>
<feature type="strand" evidence="2">
    <location>
        <begin position="4"/>
        <end position="7"/>
    </location>
</feature>
<feature type="strand" evidence="2">
    <location>
        <begin position="10"/>
        <end position="12"/>
    </location>
</feature>
<feature type="helix" evidence="2">
    <location>
        <begin position="14"/>
        <end position="30"/>
    </location>
</feature>
<feature type="strand" evidence="2">
    <location>
        <begin position="37"/>
        <end position="41"/>
    </location>
</feature>
<feature type="strand" evidence="2">
    <location>
        <begin position="55"/>
        <end position="60"/>
    </location>
</feature>
<feature type="strand" evidence="2">
    <location>
        <begin position="74"/>
        <end position="80"/>
    </location>
</feature>
<feature type="strand" evidence="2">
    <location>
        <begin position="85"/>
        <end position="91"/>
    </location>
</feature>
<feature type="strand" evidence="2">
    <location>
        <begin position="94"/>
        <end position="97"/>
    </location>
</feature>
<dbReference type="EC" id="4.6.1.24"/>
<dbReference type="PIR" id="A00800">
    <property type="entry name" value="NRASTP"/>
</dbReference>
<dbReference type="PDB" id="1RDS">
    <property type="method" value="X-ray"/>
    <property type="resolution" value="1.80 A"/>
    <property type="chains" value="A=1-105"/>
</dbReference>
<dbReference type="PDB" id="1RMS">
    <property type="method" value="X-ray"/>
    <property type="resolution" value="1.90 A"/>
    <property type="chains" value="A=1-105"/>
</dbReference>
<dbReference type="PDBsum" id="1RDS"/>
<dbReference type="PDBsum" id="1RMS"/>
<dbReference type="SMR" id="P00653"/>
<dbReference type="EvolutionaryTrace" id="P00653"/>
<dbReference type="GO" id="GO:0016829">
    <property type="term" value="F:lyase activity"/>
    <property type="evidence" value="ECO:0007669"/>
    <property type="project" value="UniProtKB-KW"/>
</dbReference>
<dbReference type="GO" id="GO:0046589">
    <property type="term" value="F:ribonuclease T1 activity"/>
    <property type="evidence" value="ECO:0007669"/>
    <property type="project" value="UniProtKB-EC"/>
</dbReference>
<dbReference type="GO" id="GO:0003723">
    <property type="term" value="F:RNA binding"/>
    <property type="evidence" value="ECO:0007669"/>
    <property type="project" value="InterPro"/>
</dbReference>
<dbReference type="GO" id="GO:0004521">
    <property type="term" value="F:RNA endonuclease activity"/>
    <property type="evidence" value="ECO:0007669"/>
    <property type="project" value="InterPro"/>
</dbReference>
<dbReference type="CDD" id="cd00606">
    <property type="entry name" value="fungal_RNase"/>
    <property type="match status" value="1"/>
</dbReference>
<dbReference type="Gene3D" id="3.10.450.30">
    <property type="entry name" value="Microbial ribonucleases"/>
    <property type="match status" value="1"/>
</dbReference>
<dbReference type="InterPro" id="IPR000026">
    <property type="entry name" value="N1-like"/>
</dbReference>
<dbReference type="InterPro" id="IPR016191">
    <property type="entry name" value="Ribonuclease/ribotoxin"/>
</dbReference>
<dbReference type="InterPro" id="IPR051386">
    <property type="entry name" value="Ribonuclease_N1/T1"/>
</dbReference>
<dbReference type="PANTHER" id="PTHR42104">
    <property type="entry name" value="EXTRACELLULAR GUANYL-SPECIFIC RIBONUCLEASE RNTA (AFU_ORTHOLOGUE AFUA_4G03230)"/>
    <property type="match status" value="1"/>
</dbReference>
<dbReference type="PANTHER" id="PTHR42104:SF1">
    <property type="entry name" value="EXTRACELLULAR GUANYL-SPECIFIC RIBONUCLEASE RNTA (AFU_ORTHOLOGUE AFUA_4G03230)"/>
    <property type="match status" value="1"/>
</dbReference>
<dbReference type="Pfam" id="PF00545">
    <property type="entry name" value="Ribonuclease"/>
    <property type="match status" value="1"/>
</dbReference>
<dbReference type="SUPFAM" id="SSF53933">
    <property type="entry name" value="Microbial ribonucleases"/>
    <property type="match status" value="1"/>
</dbReference>
<keyword id="KW-0002">3D-structure</keyword>
<keyword id="KW-0903">Direct protein sequencing</keyword>
<keyword id="KW-1015">Disulfide bond</keyword>
<keyword id="KW-0255">Endonuclease</keyword>
<keyword id="KW-0378">Hydrolase</keyword>
<keyword id="KW-0456">Lyase</keyword>
<keyword id="KW-0540">Nuclease</keyword>
<protein>
    <recommendedName>
        <fullName>Guanyl-specific ribonuclease Ms</fullName>
        <shortName>RNase Ms</shortName>
        <ecNumber>4.6.1.24</ecNumber>
    </recommendedName>
</protein>
<sequence length="105" mass="11332">ESCEYTCGSTCYWSSDVSAAKAKGYSLYESGDTIDDYPHGYHDYEGFDFPVSGTYYEYPIMSDYDVYTGGSPGADRVIFNGDDELAGVITHTGASGDDFVACSSS</sequence>
<proteinExistence type="evidence at protein level"/>
<organism>
    <name type="scientific">Aspergillus phoenicis</name>
    <name type="common">Aspergillus saitoi</name>
    <dbReference type="NCBI Taxonomy" id="5063"/>
    <lineage>
        <taxon>Eukaryota</taxon>
        <taxon>Fungi</taxon>
        <taxon>Dikarya</taxon>
        <taxon>Ascomycota</taxon>
        <taxon>Pezizomycotina</taxon>
        <taxon>Eurotiomycetes</taxon>
        <taxon>Eurotiomycetidae</taxon>
        <taxon>Eurotiales</taxon>
        <taxon>Aspergillaceae</taxon>
        <taxon>Aspergillus</taxon>
    </lineage>
</organism>
<accession>P00653</accession>